<gene>
    <name type="primary">PDIA5</name>
    <name type="synonym">PDIR</name>
</gene>
<evidence type="ECO:0000255" key="1"/>
<evidence type="ECO:0000255" key="2">
    <source>
        <dbReference type="PROSITE-ProRule" id="PRU00691"/>
    </source>
</evidence>
<evidence type="ECO:0000255" key="3">
    <source>
        <dbReference type="PROSITE-ProRule" id="PRU10138"/>
    </source>
</evidence>
<evidence type="ECO:0000269" key="4">
    <source>
    </source>
</evidence>
<evidence type="ECO:0000303" key="5">
    <source>
    </source>
</evidence>
<evidence type="ECO:0000305" key="6"/>
<evidence type="ECO:0007744" key="7">
    <source>
        <dbReference type="PDB" id="4I6X"/>
    </source>
</evidence>
<evidence type="ECO:0007829" key="8">
    <source>
        <dbReference type="PDB" id="4I6X"/>
    </source>
</evidence>
<name>PDIA5_HUMAN</name>
<keyword id="KW-0002">3D-structure</keyword>
<keyword id="KW-0025">Alternative splicing</keyword>
<keyword id="KW-1015">Disulfide bond</keyword>
<keyword id="KW-0256">Endoplasmic reticulum</keyword>
<keyword id="KW-0413">Isomerase</keyword>
<keyword id="KW-1267">Proteomics identification</keyword>
<keyword id="KW-0676">Redox-active center</keyword>
<keyword id="KW-1185">Reference proteome</keyword>
<keyword id="KW-0677">Repeat</keyword>
<keyword id="KW-0732">Signal</keyword>
<dbReference type="EC" id="5.3.4.1"/>
<dbReference type="EMBL" id="D49490">
    <property type="protein sequence ID" value="BAA08451.1"/>
    <property type="molecule type" value="mRNA"/>
</dbReference>
<dbReference type="EMBL" id="AC063922">
    <property type="status" value="NOT_ANNOTATED_CDS"/>
    <property type="molecule type" value="Genomic_DNA"/>
</dbReference>
<dbReference type="EMBL" id="AC083797">
    <property type="status" value="NOT_ANNOTATED_CDS"/>
    <property type="molecule type" value="Genomic_DNA"/>
</dbReference>
<dbReference type="EMBL" id="CH471052">
    <property type="protein sequence ID" value="EAW79452.1"/>
    <property type="molecule type" value="Genomic_DNA"/>
</dbReference>
<dbReference type="EMBL" id="CH471052">
    <property type="protein sequence ID" value="EAW79453.1"/>
    <property type="molecule type" value="Genomic_DNA"/>
</dbReference>
<dbReference type="EMBL" id="CH471052">
    <property type="protein sequence ID" value="EAW79454.1"/>
    <property type="molecule type" value="Genomic_DNA"/>
</dbReference>
<dbReference type="EMBL" id="CH471052">
    <property type="protein sequence ID" value="EAW79456.1"/>
    <property type="molecule type" value="Genomic_DNA"/>
</dbReference>
<dbReference type="EMBL" id="BC001625">
    <property type="protein sequence ID" value="AAH01625.1"/>
    <property type="molecule type" value="mRNA"/>
</dbReference>
<dbReference type="CCDS" id="CCDS3020.1">
    <molecule id="Q14554-1"/>
</dbReference>
<dbReference type="PIR" id="S66673">
    <property type="entry name" value="S66673"/>
</dbReference>
<dbReference type="RefSeq" id="NP_006801.1">
    <molecule id="Q14554-1"/>
    <property type="nucleotide sequence ID" value="NM_006810.4"/>
</dbReference>
<dbReference type="PDB" id="4I6X">
    <property type="method" value="X-ray"/>
    <property type="resolution" value="1.50 A"/>
    <property type="chains" value="A=29-150"/>
</dbReference>
<dbReference type="PDBsum" id="4I6X"/>
<dbReference type="SMR" id="Q14554"/>
<dbReference type="BioGRID" id="116154">
    <property type="interactions" value="141"/>
</dbReference>
<dbReference type="FunCoup" id="Q14554">
    <property type="interactions" value="1169"/>
</dbReference>
<dbReference type="IntAct" id="Q14554">
    <property type="interactions" value="68"/>
</dbReference>
<dbReference type="STRING" id="9606.ENSP00000323313"/>
<dbReference type="GlyCosmos" id="Q14554">
    <property type="glycosylation" value="1 site, 1 glycan"/>
</dbReference>
<dbReference type="GlyGen" id="Q14554">
    <property type="glycosylation" value="3 sites, 3 O-linked glycans (3 sites)"/>
</dbReference>
<dbReference type="iPTMnet" id="Q14554"/>
<dbReference type="PhosphoSitePlus" id="Q14554"/>
<dbReference type="SwissPalm" id="Q14554"/>
<dbReference type="BioMuta" id="PDIA5"/>
<dbReference type="DMDM" id="2501208"/>
<dbReference type="jPOST" id="Q14554"/>
<dbReference type="MassIVE" id="Q14554"/>
<dbReference type="PaxDb" id="9606-ENSP00000323313"/>
<dbReference type="PeptideAtlas" id="Q14554"/>
<dbReference type="ProteomicsDB" id="60041">
    <molecule id="Q14554-1"/>
</dbReference>
<dbReference type="ProteomicsDB" id="79167"/>
<dbReference type="Pumba" id="Q14554"/>
<dbReference type="Antibodypedia" id="32940">
    <property type="antibodies" value="190 antibodies from 28 providers"/>
</dbReference>
<dbReference type="DNASU" id="10954"/>
<dbReference type="Ensembl" id="ENST00000316218.12">
    <molecule id="Q14554-1"/>
    <property type="protein sequence ID" value="ENSP00000323313.7"/>
    <property type="gene ID" value="ENSG00000065485.20"/>
</dbReference>
<dbReference type="Ensembl" id="ENST00000489923.5">
    <molecule id="Q14554-2"/>
    <property type="protein sequence ID" value="ENSP00000417520.1"/>
    <property type="gene ID" value="ENSG00000065485.20"/>
</dbReference>
<dbReference type="GeneID" id="10954"/>
<dbReference type="KEGG" id="hsa:10954"/>
<dbReference type="MANE-Select" id="ENST00000316218.12">
    <property type="protein sequence ID" value="ENSP00000323313.7"/>
    <property type="RefSeq nucleotide sequence ID" value="NM_006810.4"/>
    <property type="RefSeq protein sequence ID" value="NP_006801.1"/>
</dbReference>
<dbReference type="UCSC" id="uc003egc.3">
    <molecule id="Q14554-1"/>
    <property type="organism name" value="human"/>
</dbReference>
<dbReference type="AGR" id="HGNC:24811"/>
<dbReference type="CTD" id="10954"/>
<dbReference type="DisGeNET" id="10954"/>
<dbReference type="GeneCards" id="PDIA5"/>
<dbReference type="HGNC" id="HGNC:24811">
    <property type="gene designation" value="PDIA5"/>
</dbReference>
<dbReference type="HPA" id="ENSG00000065485">
    <property type="expression patterns" value="Tissue enhanced (liver)"/>
</dbReference>
<dbReference type="neXtProt" id="NX_Q14554"/>
<dbReference type="OpenTargets" id="ENSG00000065485"/>
<dbReference type="PharmGKB" id="PA142671191"/>
<dbReference type="VEuPathDB" id="HostDB:ENSG00000065485"/>
<dbReference type="eggNOG" id="KOG0191">
    <property type="taxonomic scope" value="Eukaryota"/>
</dbReference>
<dbReference type="GeneTree" id="ENSGT00940000156797"/>
<dbReference type="HOGENOM" id="CLU_1061567_0_0_1"/>
<dbReference type="InParanoid" id="Q14554"/>
<dbReference type="OMA" id="FCKKMKP"/>
<dbReference type="OrthoDB" id="74910at2759"/>
<dbReference type="PAN-GO" id="Q14554">
    <property type="GO annotations" value="3 GO annotations based on evolutionary models"/>
</dbReference>
<dbReference type="PhylomeDB" id="Q14554"/>
<dbReference type="TreeFam" id="TF106379"/>
<dbReference type="PathwayCommons" id="Q14554"/>
<dbReference type="Reactome" id="R-HSA-381038">
    <property type="pathway name" value="XBP1(S) activates chaperone genes"/>
</dbReference>
<dbReference type="SignaLink" id="Q14554"/>
<dbReference type="BioGRID-ORCS" id="10954">
    <property type="hits" value="15 hits in 1154 CRISPR screens"/>
</dbReference>
<dbReference type="ChiTaRS" id="PDIA5">
    <property type="organism name" value="human"/>
</dbReference>
<dbReference type="EvolutionaryTrace" id="Q14554"/>
<dbReference type="GenomeRNAi" id="10954"/>
<dbReference type="Pharos" id="Q14554">
    <property type="development level" value="Tbio"/>
</dbReference>
<dbReference type="PRO" id="PR:Q14554"/>
<dbReference type="Proteomes" id="UP000005640">
    <property type="component" value="Chromosome 3"/>
</dbReference>
<dbReference type="RNAct" id="Q14554">
    <property type="molecule type" value="protein"/>
</dbReference>
<dbReference type="Bgee" id="ENSG00000065485">
    <property type="expression patterns" value="Expressed in liver and 184 other cell types or tissues"/>
</dbReference>
<dbReference type="ExpressionAtlas" id="Q14554">
    <property type="expression patterns" value="baseline and differential"/>
</dbReference>
<dbReference type="GO" id="GO:0005783">
    <property type="term" value="C:endoplasmic reticulum"/>
    <property type="evidence" value="ECO:0000318"/>
    <property type="project" value="GO_Central"/>
</dbReference>
<dbReference type="GO" id="GO:0005788">
    <property type="term" value="C:endoplasmic reticulum lumen"/>
    <property type="evidence" value="ECO:0000304"/>
    <property type="project" value="UniProtKB"/>
</dbReference>
<dbReference type="GO" id="GO:0005789">
    <property type="term" value="C:endoplasmic reticulum membrane"/>
    <property type="evidence" value="ECO:0000304"/>
    <property type="project" value="Reactome"/>
</dbReference>
<dbReference type="GO" id="GO:0016491">
    <property type="term" value="F:oxidoreductase activity"/>
    <property type="evidence" value="ECO:0000304"/>
    <property type="project" value="UniProtKB"/>
</dbReference>
<dbReference type="GO" id="GO:0003756">
    <property type="term" value="F:protein disulfide isomerase activity"/>
    <property type="evidence" value="ECO:0000314"/>
    <property type="project" value="FlyBase"/>
</dbReference>
<dbReference type="GO" id="GO:0015035">
    <property type="term" value="F:protein-disulfide reductase activity"/>
    <property type="evidence" value="ECO:0000314"/>
    <property type="project" value="UniProtKB"/>
</dbReference>
<dbReference type="GO" id="GO:0022900">
    <property type="term" value="P:electron transport chain"/>
    <property type="evidence" value="ECO:0000304"/>
    <property type="project" value="UniProtKB"/>
</dbReference>
<dbReference type="GO" id="GO:0006457">
    <property type="term" value="P:protein folding"/>
    <property type="evidence" value="ECO:0000314"/>
    <property type="project" value="FlyBase"/>
</dbReference>
<dbReference type="CDD" id="cd02997">
    <property type="entry name" value="PDI_a_PDIR"/>
    <property type="match status" value="3"/>
</dbReference>
<dbReference type="CDD" id="cd03067">
    <property type="entry name" value="PDI_b_PDIR_N"/>
    <property type="match status" value="1"/>
</dbReference>
<dbReference type="FunFam" id="3.40.30.10:FF:000029">
    <property type="entry name" value="protein disulfide-isomerase A5 isoform X2"/>
    <property type="match status" value="3"/>
</dbReference>
<dbReference type="FunFam" id="3.40.30.10:FF:000105">
    <property type="entry name" value="protein disulfide-isomerase A5 isoform X2"/>
    <property type="match status" value="1"/>
</dbReference>
<dbReference type="Gene3D" id="3.40.30.10">
    <property type="entry name" value="Glutaredoxin"/>
    <property type="match status" value="4"/>
</dbReference>
<dbReference type="InterPro" id="IPR051063">
    <property type="entry name" value="PDI"/>
</dbReference>
<dbReference type="InterPro" id="IPR046374">
    <property type="entry name" value="PDI_a_PDIR"/>
</dbReference>
<dbReference type="InterPro" id="IPR041865">
    <property type="entry name" value="PDI_b_PDIR_N"/>
</dbReference>
<dbReference type="InterPro" id="IPR036249">
    <property type="entry name" value="Thioredoxin-like_sf"/>
</dbReference>
<dbReference type="InterPro" id="IPR017937">
    <property type="entry name" value="Thioredoxin_CS"/>
</dbReference>
<dbReference type="InterPro" id="IPR013766">
    <property type="entry name" value="Thioredoxin_domain"/>
</dbReference>
<dbReference type="PANTHER" id="PTHR45672:SF2">
    <property type="entry name" value="PROTEIN DISULFIDE-ISOMERASE A5"/>
    <property type="match status" value="1"/>
</dbReference>
<dbReference type="PANTHER" id="PTHR45672">
    <property type="entry name" value="PROTEIN DISULFIDE-ISOMERASE C17H9.14C-RELATED"/>
    <property type="match status" value="1"/>
</dbReference>
<dbReference type="Pfam" id="PF00085">
    <property type="entry name" value="Thioredoxin"/>
    <property type="match status" value="3"/>
</dbReference>
<dbReference type="PRINTS" id="PR00421">
    <property type="entry name" value="THIOREDOXIN"/>
</dbReference>
<dbReference type="SUPFAM" id="SSF52833">
    <property type="entry name" value="Thioredoxin-like"/>
    <property type="match status" value="4"/>
</dbReference>
<dbReference type="PROSITE" id="PS00014">
    <property type="entry name" value="ER_TARGET"/>
    <property type="match status" value="1"/>
</dbReference>
<dbReference type="PROSITE" id="PS00194">
    <property type="entry name" value="THIOREDOXIN_1"/>
    <property type="match status" value="2"/>
</dbReference>
<dbReference type="PROSITE" id="PS51352">
    <property type="entry name" value="THIOREDOXIN_2"/>
    <property type="match status" value="3"/>
</dbReference>
<proteinExistence type="evidence at protein level"/>
<feature type="signal peptide" evidence="1">
    <location>
        <begin position="1"/>
        <end position="21"/>
    </location>
</feature>
<feature type="chain" id="PRO_0000034233" description="Protein disulfide-isomerase A5">
    <location>
        <begin position="22"/>
        <end position="519"/>
    </location>
</feature>
<feature type="domain" description="Thioredoxin 1" evidence="2">
    <location>
        <begin position="134"/>
        <end position="261"/>
    </location>
</feature>
<feature type="domain" description="Thioredoxin 2" evidence="2">
    <location>
        <begin position="270"/>
        <end position="384"/>
    </location>
</feature>
<feature type="domain" description="Thioredoxin 3" evidence="2">
    <location>
        <begin position="378"/>
        <end position="506"/>
    </location>
</feature>
<feature type="short sequence motif" description="Prevents secretion from ER" evidence="3">
    <location>
        <begin position="516"/>
        <end position="519"/>
    </location>
</feature>
<feature type="disulfide bond" evidence="4 7">
    <location>
        <begin position="85"/>
        <end position="94"/>
    </location>
</feature>
<feature type="disulfide bond" description="Redox-active" evidence="2">
    <location>
        <begin position="182"/>
        <end position="185"/>
    </location>
</feature>
<feature type="disulfide bond" description="Redox-active" evidence="2">
    <location>
        <begin position="305"/>
        <end position="308"/>
    </location>
</feature>
<feature type="disulfide bond" description="Redox-active" evidence="2">
    <location>
        <begin position="426"/>
        <end position="429"/>
    </location>
</feature>
<feature type="splice variant" id="VSP_056536" description="In isoform 2." evidence="5">
    <original>NPQP</original>
    <variation>KVWP</variation>
    <location>
        <begin position="258"/>
        <end position="261"/>
    </location>
</feature>
<feature type="splice variant" id="VSP_056537" description="In isoform 2." evidence="5">
    <location>
        <begin position="262"/>
        <end position="518"/>
    </location>
</feature>
<feature type="sequence variant" id="VAR_052581" description="In dbSNP:rs2292661.">
    <original>T</original>
    <variation>M</variation>
    <location>
        <position position="391"/>
    </location>
</feature>
<feature type="helix" evidence="8">
    <location>
        <begin position="36"/>
        <end position="45"/>
    </location>
</feature>
<feature type="strand" evidence="8">
    <location>
        <begin position="47"/>
        <end position="56"/>
    </location>
</feature>
<feature type="helix" evidence="8">
    <location>
        <begin position="57"/>
        <end position="73"/>
    </location>
</feature>
<feature type="turn" evidence="8">
    <location>
        <begin position="74"/>
        <end position="77"/>
    </location>
</feature>
<feature type="strand" evidence="8">
    <location>
        <begin position="79"/>
        <end position="84"/>
    </location>
</feature>
<feature type="helix" evidence="8">
    <location>
        <begin position="88"/>
        <end position="96"/>
    </location>
</feature>
<feature type="strand" evidence="8">
    <location>
        <begin position="108"/>
        <end position="114"/>
    </location>
</feature>
<feature type="strand" evidence="8">
    <location>
        <begin position="117"/>
        <end position="121"/>
    </location>
</feature>
<feature type="helix" evidence="8">
    <location>
        <begin position="128"/>
        <end position="136"/>
    </location>
</feature>
<reference key="1">
    <citation type="journal article" date="1995" name="FEBS Lett.">
        <title>Molecular cloning of the cDNA encoding a novel protein disulfide isomerase-related protein (PDIR).</title>
        <authorList>
            <person name="Hayano T."/>
            <person name="Kikuchi M."/>
        </authorList>
    </citation>
    <scope>NUCLEOTIDE SEQUENCE [MRNA] (ISOFORM 1)</scope>
</reference>
<reference key="2">
    <citation type="journal article" date="2006" name="Nature">
        <title>The DNA sequence, annotation and analysis of human chromosome 3.</title>
        <authorList>
            <person name="Muzny D.M."/>
            <person name="Scherer S.E."/>
            <person name="Kaul R."/>
            <person name="Wang J."/>
            <person name="Yu J."/>
            <person name="Sudbrak R."/>
            <person name="Buhay C.J."/>
            <person name="Chen R."/>
            <person name="Cree A."/>
            <person name="Ding Y."/>
            <person name="Dugan-Rocha S."/>
            <person name="Gill R."/>
            <person name="Gunaratne P."/>
            <person name="Harris R.A."/>
            <person name="Hawes A.C."/>
            <person name="Hernandez J."/>
            <person name="Hodgson A.V."/>
            <person name="Hume J."/>
            <person name="Jackson A."/>
            <person name="Khan Z.M."/>
            <person name="Kovar-Smith C."/>
            <person name="Lewis L.R."/>
            <person name="Lozado R.J."/>
            <person name="Metzker M.L."/>
            <person name="Milosavljevic A."/>
            <person name="Miner G.R."/>
            <person name="Morgan M.B."/>
            <person name="Nazareth L.V."/>
            <person name="Scott G."/>
            <person name="Sodergren E."/>
            <person name="Song X.-Z."/>
            <person name="Steffen D."/>
            <person name="Wei S."/>
            <person name="Wheeler D.A."/>
            <person name="Wright M.W."/>
            <person name="Worley K.C."/>
            <person name="Yuan Y."/>
            <person name="Zhang Z."/>
            <person name="Adams C.Q."/>
            <person name="Ansari-Lari M.A."/>
            <person name="Ayele M."/>
            <person name="Brown M.J."/>
            <person name="Chen G."/>
            <person name="Chen Z."/>
            <person name="Clendenning J."/>
            <person name="Clerc-Blankenburg K.P."/>
            <person name="Chen R."/>
            <person name="Chen Z."/>
            <person name="Davis C."/>
            <person name="Delgado O."/>
            <person name="Dinh H.H."/>
            <person name="Dong W."/>
            <person name="Draper H."/>
            <person name="Ernst S."/>
            <person name="Fu G."/>
            <person name="Gonzalez-Garay M.L."/>
            <person name="Garcia D.K."/>
            <person name="Gillett W."/>
            <person name="Gu J."/>
            <person name="Hao B."/>
            <person name="Haugen E."/>
            <person name="Havlak P."/>
            <person name="He X."/>
            <person name="Hennig S."/>
            <person name="Hu S."/>
            <person name="Huang W."/>
            <person name="Jackson L.R."/>
            <person name="Jacob L.S."/>
            <person name="Kelly S.H."/>
            <person name="Kube M."/>
            <person name="Levy R."/>
            <person name="Li Z."/>
            <person name="Liu B."/>
            <person name="Liu J."/>
            <person name="Liu W."/>
            <person name="Lu J."/>
            <person name="Maheshwari M."/>
            <person name="Nguyen B.-V."/>
            <person name="Okwuonu G.O."/>
            <person name="Palmeiri A."/>
            <person name="Pasternak S."/>
            <person name="Perez L.M."/>
            <person name="Phelps K.A."/>
            <person name="Plopper F.J."/>
            <person name="Qiang B."/>
            <person name="Raymond C."/>
            <person name="Rodriguez R."/>
            <person name="Saenphimmachak C."/>
            <person name="Santibanez J."/>
            <person name="Shen H."/>
            <person name="Shen Y."/>
            <person name="Subramanian S."/>
            <person name="Tabor P.E."/>
            <person name="Verduzco D."/>
            <person name="Waldron L."/>
            <person name="Wang J."/>
            <person name="Wang J."/>
            <person name="Wang Q."/>
            <person name="Williams G.A."/>
            <person name="Wong G.K.-S."/>
            <person name="Yao Z."/>
            <person name="Zhang J."/>
            <person name="Zhang X."/>
            <person name="Zhao G."/>
            <person name="Zhou J."/>
            <person name="Zhou Y."/>
            <person name="Nelson D."/>
            <person name="Lehrach H."/>
            <person name="Reinhardt R."/>
            <person name="Naylor S.L."/>
            <person name="Yang H."/>
            <person name="Olson M."/>
            <person name="Weinstock G."/>
            <person name="Gibbs R.A."/>
        </authorList>
    </citation>
    <scope>NUCLEOTIDE SEQUENCE [LARGE SCALE GENOMIC DNA]</scope>
</reference>
<reference key="3">
    <citation type="submission" date="2005-09" db="EMBL/GenBank/DDBJ databases">
        <authorList>
            <person name="Mural R.J."/>
            <person name="Istrail S."/>
            <person name="Sutton G.G."/>
            <person name="Florea L."/>
            <person name="Halpern A.L."/>
            <person name="Mobarry C.M."/>
            <person name="Lippert R."/>
            <person name="Walenz B."/>
            <person name="Shatkay H."/>
            <person name="Dew I."/>
            <person name="Miller J.R."/>
            <person name="Flanigan M.J."/>
            <person name="Edwards N.J."/>
            <person name="Bolanos R."/>
            <person name="Fasulo D."/>
            <person name="Halldorsson B.V."/>
            <person name="Hannenhalli S."/>
            <person name="Turner R."/>
            <person name="Yooseph S."/>
            <person name="Lu F."/>
            <person name="Nusskern D.R."/>
            <person name="Shue B.C."/>
            <person name="Zheng X.H."/>
            <person name="Zhong F."/>
            <person name="Delcher A.L."/>
            <person name="Huson D.H."/>
            <person name="Kravitz S.A."/>
            <person name="Mouchard L."/>
            <person name="Reinert K."/>
            <person name="Remington K.A."/>
            <person name="Clark A.G."/>
            <person name="Waterman M.S."/>
            <person name="Eichler E.E."/>
            <person name="Adams M.D."/>
            <person name="Hunkapiller M.W."/>
            <person name="Myers E.W."/>
            <person name="Venter J.C."/>
        </authorList>
    </citation>
    <scope>NUCLEOTIDE SEQUENCE [LARGE SCALE GENOMIC DNA]</scope>
</reference>
<reference key="4">
    <citation type="journal article" date="2004" name="Genome Res.">
        <title>The status, quality, and expansion of the NIH full-length cDNA project: the Mammalian Gene Collection (MGC).</title>
        <authorList>
            <consortium name="The MGC Project Team"/>
        </authorList>
    </citation>
    <scope>NUCLEOTIDE SEQUENCE [LARGE SCALE MRNA] (ISOFORM 2)</scope>
    <source>
        <tissue>Lung</tissue>
    </source>
</reference>
<reference key="5">
    <citation type="journal article" date="2011" name="BMC Syst. Biol.">
        <title>Initial characterization of the human central proteome.</title>
        <authorList>
            <person name="Burkard T.R."/>
            <person name="Planyavsky M."/>
            <person name="Kaupe I."/>
            <person name="Breitwieser F.P."/>
            <person name="Buerckstuemmer T."/>
            <person name="Bennett K.L."/>
            <person name="Superti-Furga G."/>
            <person name="Colinge J."/>
        </authorList>
    </citation>
    <scope>IDENTIFICATION BY MASS SPECTROMETRY [LARGE SCALE ANALYSIS]</scope>
</reference>
<reference key="6">
    <citation type="journal article" date="2014" name="J. Proteomics">
        <title>An enzyme assisted RP-RPLC approach for in-depth analysis of human liver phosphoproteome.</title>
        <authorList>
            <person name="Bian Y."/>
            <person name="Song C."/>
            <person name="Cheng K."/>
            <person name="Dong M."/>
            <person name="Wang F."/>
            <person name="Huang J."/>
            <person name="Sun D."/>
            <person name="Wang L."/>
            <person name="Ye M."/>
            <person name="Zou H."/>
        </authorList>
    </citation>
    <scope>IDENTIFICATION BY MASS SPECTROMETRY [LARGE SCALE ANALYSIS]</scope>
    <source>
        <tissue>Liver</tissue>
    </source>
</reference>
<reference key="7">
    <citation type="journal article" date="2015" name="Proteomics">
        <title>N-terminome analysis of the human mitochondrial proteome.</title>
        <authorList>
            <person name="Vaca Jacome A.S."/>
            <person name="Rabilloud T."/>
            <person name="Schaeffer-Reiss C."/>
            <person name="Rompais M."/>
            <person name="Ayoub D."/>
            <person name="Lane L."/>
            <person name="Bairoch A."/>
            <person name="Van Dorsselaer A."/>
            <person name="Carapito C."/>
        </authorList>
    </citation>
    <scope>IDENTIFICATION BY MASS SPECTROMETRY [LARGE SCALE ANALYSIS]</scope>
</reference>
<reference key="8">
    <citation type="journal article" date="2013" name="PLoS ONE">
        <title>Structure of the non-catalytic domain of the protein disulfide isomerase-related protein (PDIR) reveals function in protein binding.</title>
        <authorList>
            <person name="Vinaik R."/>
            <person name="Kozlov G."/>
            <person name="Gehring K."/>
        </authorList>
    </citation>
    <scope>X-RAY CRYSTALLOGRAPHY (1.50 ANGSTROMS) OF 29-150</scope>
    <scope>DISULFIDE BOND</scope>
    <scope>INTERACTION WITH CALR</scope>
</reference>
<comment type="catalytic activity">
    <reaction>
        <text>Catalyzes the rearrangement of -S-S- bonds in proteins.</text>
        <dbReference type="EC" id="5.3.4.1"/>
    </reaction>
</comment>
<comment type="subunit">
    <text evidence="4">Interacts with CALR (via P-domain).</text>
</comment>
<comment type="interaction">
    <interactant intactId="EBI-953879">
        <id>Q14554</id>
    </interactant>
    <interactant intactId="EBI-10172290">
        <id>P60409</id>
        <label>KRTAP10-7</label>
    </interactant>
    <organismsDiffer>false</organismsDiffer>
    <experiments>3</experiments>
</comment>
<comment type="interaction">
    <interactant intactId="EBI-953879">
        <id>Q14554</id>
    </interactant>
    <interactant intactId="EBI-724076">
        <id>Q99750</id>
        <label>MDFI</label>
    </interactant>
    <organismsDiffer>false</organismsDiffer>
    <experiments>3</experiments>
</comment>
<comment type="interaction">
    <interactant intactId="EBI-953879">
        <id>Q14554</id>
    </interactant>
    <interactant intactId="EBI-718622">
        <id>Q969H8</id>
        <label>MYDGF</label>
    </interactant>
    <organismsDiffer>false</organismsDiffer>
    <experiments>2</experiments>
</comment>
<comment type="interaction">
    <interactant intactId="EBI-12094562">
        <id>Q14554-2</id>
    </interactant>
    <interactant intactId="EBI-11749135">
        <id>Q8IUG1</id>
        <label>KRTAP1-3</label>
    </interactant>
    <organismsDiffer>false</organismsDiffer>
    <experiments>3</experiments>
</comment>
<comment type="subcellular location">
    <subcellularLocation>
        <location evidence="3">Endoplasmic reticulum lumen</location>
    </subcellularLocation>
</comment>
<comment type="alternative products">
    <event type="alternative splicing"/>
    <isoform>
        <id>Q14554-1</id>
        <name>1</name>
        <sequence type="displayed"/>
    </isoform>
    <isoform>
        <id>Q14554-2</id>
        <name>2</name>
        <sequence type="described" ref="VSP_056536 VSP_056537"/>
    </isoform>
</comment>
<comment type="similarity">
    <text evidence="6">Belongs to the protein disulfide isomerase family.</text>
</comment>
<protein>
    <recommendedName>
        <fullName>Protein disulfide-isomerase A5</fullName>
        <ecNumber>5.3.4.1</ecNumber>
    </recommendedName>
    <alternativeName>
        <fullName>Protein disulfide isomerase-related protein</fullName>
    </alternativeName>
</protein>
<accession>Q14554</accession>
<accession>D3DN95</accession>
<accession>Q9BV43</accession>
<sequence>MARAGPAWLLLAIWVVLPSWLSSAKVSSLIERISDPKDLKKLLRTRNNVLVLYSKSEVAAENHLRLLSTVAQAVKGQGTICWVDCGDAESRKLCKKMKVDLSPKDKKVELFHYQDGAFHTEYNRAVTFKSIVAFLKDPKGPPLWEEDPGAKDVVHLDSEKDFRRLLKKEEKPLLIMFYAPWCSMCKRMMPHFQKAATQLRGHAVLAGMNVYSSEFENIKEEYSVRGFPTICYFEKGRFLFQYDNYGSTAEDIVEWLKNPQPPQPQVPETPWADEGGSVYHLTDEDFDQFVKEHSSVLVMFHAPWCGHCKKMKPEFEKAAEALHGEADSSGVLAAVDATVNKALAERFHISEFPTLKYFKNGEKYAVPVLRTKKKFLEWMQNPEAPPPPEPTWEEQQTSVLHLVGDNFRETLKKKKHTLVMFYAPWCPHCKKVIPHFTATADAFKDDRKIACAAVDCVKDKNQDLCQQEAVKGYPTFHYYHYGKFAEKYDSDRTELGFTNYIRALREGDHERLGKKKEEL</sequence>
<organism>
    <name type="scientific">Homo sapiens</name>
    <name type="common">Human</name>
    <dbReference type="NCBI Taxonomy" id="9606"/>
    <lineage>
        <taxon>Eukaryota</taxon>
        <taxon>Metazoa</taxon>
        <taxon>Chordata</taxon>
        <taxon>Craniata</taxon>
        <taxon>Vertebrata</taxon>
        <taxon>Euteleostomi</taxon>
        <taxon>Mammalia</taxon>
        <taxon>Eutheria</taxon>
        <taxon>Euarchontoglires</taxon>
        <taxon>Primates</taxon>
        <taxon>Haplorrhini</taxon>
        <taxon>Catarrhini</taxon>
        <taxon>Hominidae</taxon>
        <taxon>Homo</taxon>
    </lineage>
</organism>